<feature type="chain" id="PRO_0000301456" description="UDP-N-acetylmuramoylalanine--D-glutamate ligase">
    <location>
        <begin position="1"/>
        <end position="462"/>
    </location>
</feature>
<feature type="binding site" evidence="1">
    <location>
        <begin position="111"/>
        <end position="117"/>
    </location>
    <ligand>
        <name>ATP</name>
        <dbReference type="ChEBI" id="CHEBI:30616"/>
    </ligand>
</feature>
<gene>
    <name evidence="1" type="primary">murD</name>
    <name type="ordered locus">Tery_4482</name>
</gene>
<dbReference type="EC" id="6.3.2.9" evidence="1"/>
<dbReference type="EMBL" id="CP000393">
    <property type="protein sequence ID" value="ABG53469.1"/>
    <property type="molecule type" value="Genomic_DNA"/>
</dbReference>
<dbReference type="RefSeq" id="WP_011613791.1">
    <property type="nucleotide sequence ID" value="NC_008312.1"/>
</dbReference>
<dbReference type="SMR" id="Q10WA5"/>
<dbReference type="STRING" id="203124.Tery_4482"/>
<dbReference type="KEGG" id="ter:Tery_4482"/>
<dbReference type="eggNOG" id="COG0771">
    <property type="taxonomic scope" value="Bacteria"/>
</dbReference>
<dbReference type="HOGENOM" id="CLU_032540_0_0_3"/>
<dbReference type="OrthoDB" id="9809796at2"/>
<dbReference type="UniPathway" id="UPA00219"/>
<dbReference type="GO" id="GO:0005737">
    <property type="term" value="C:cytoplasm"/>
    <property type="evidence" value="ECO:0007669"/>
    <property type="project" value="UniProtKB-SubCell"/>
</dbReference>
<dbReference type="GO" id="GO:0005524">
    <property type="term" value="F:ATP binding"/>
    <property type="evidence" value="ECO:0007669"/>
    <property type="project" value="UniProtKB-UniRule"/>
</dbReference>
<dbReference type="GO" id="GO:0008764">
    <property type="term" value="F:UDP-N-acetylmuramoylalanine-D-glutamate ligase activity"/>
    <property type="evidence" value="ECO:0007669"/>
    <property type="project" value="UniProtKB-UniRule"/>
</dbReference>
<dbReference type="GO" id="GO:0051301">
    <property type="term" value="P:cell division"/>
    <property type="evidence" value="ECO:0007669"/>
    <property type="project" value="UniProtKB-KW"/>
</dbReference>
<dbReference type="GO" id="GO:0071555">
    <property type="term" value="P:cell wall organization"/>
    <property type="evidence" value="ECO:0007669"/>
    <property type="project" value="UniProtKB-KW"/>
</dbReference>
<dbReference type="GO" id="GO:0009252">
    <property type="term" value="P:peptidoglycan biosynthetic process"/>
    <property type="evidence" value="ECO:0007669"/>
    <property type="project" value="UniProtKB-UniRule"/>
</dbReference>
<dbReference type="GO" id="GO:0008360">
    <property type="term" value="P:regulation of cell shape"/>
    <property type="evidence" value="ECO:0007669"/>
    <property type="project" value="UniProtKB-KW"/>
</dbReference>
<dbReference type="Gene3D" id="3.90.190.20">
    <property type="entry name" value="Mur ligase, C-terminal domain"/>
    <property type="match status" value="1"/>
</dbReference>
<dbReference type="Gene3D" id="3.40.1190.10">
    <property type="entry name" value="Mur-like, catalytic domain"/>
    <property type="match status" value="1"/>
</dbReference>
<dbReference type="Gene3D" id="3.40.50.720">
    <property type="entry name" value="NAD(P)-binding Rossmann-like Domain"/>
    <property type="match status" value="1"/>
</dbReference>
<dbReference type="HAMAP" id="MF_00639">
    <property type="entry name" value="MurD"/>
    <property type="match status" value="1"/>
</dbReference>
<dbReference type="InterPro" id="IPR036565">
    <property type="entry name" value="Mur-like_cat_sf"/>
</dbReference>
<dbReference type="InterPro" id="IPR004101">
    <property type="entry name" value="Mur_ligase_C"/>
</dbReference>
<dbReference type="InterPro" id="IPR036615">
    <property type="entry name" value="Mur_ligase_C_dom_sf"/>
</dbReference>
<dbReference type="InterPro" id="IPR013221">
    <property type="entry name" value="Mur_ligase_cen"/>
</dbReference>
<dbReference type="InterPro" id="IPR005762">
    <property type="entry name" value="MurD"/>
</dbReference>
<dbReference type="NCBIfam" id="TIGR01087">
    <property type="entry name" value="murD"/>
    <property type="match status" value="1"/>
</dbReference>
<dbReference type="PANTHER" id="PTHR43692">
    <property type="entry name" value="UDP-N-ACETYLMURAMOYLALANINE--D-GLUTAMATE LIGASE"/>
    <property type="match status" value="1"/>
</dbReference>
<dbReference type="PANTHER" id="PTHR43692:SF1">
    <property type="entry name" value="UDP-N-ACETYLMURAMOYLALANINE--D-GLUTAMATE LIGASE"/>
    <property type="match status" value="1"/>
</dbReference>
<dbReference type="Pfam" id="PF02875">
    <property type="entry name" value="Mur_ligase_C"/>
    <property type="match status" value="1"/>
</dbReference>
<dbReference type="Pfam" id="PF08245">
    <property type="entry name" value="Mur_ligase_M"/>
    <property type="match status" value="1"/>
</dbReference>
<dbReference type="Pfam" id="PF21799">
    <property type="entry name" value="MurD-like_N"/>
    <property type="match status" value="1"/>
</dbReference>
<dbReference type="SUPFAM" id="SSF51984">
    <property type="entry name" value="MurCD N-terminal domain"/>
    <property type="match status" value="1"/>
</dbReference>
<dbReference type="SUPFAM" id="SSF53623">
    <property type="entry name" value="MurD-like peptide ligases, catalytic domain"/>
    <property type="match status" value="1"/>
</dbReference>
<dbReference type="SUPFAM" id="SSF53244">
    <property type="entry name" value="MurD-like peptide ligases, peptide-binding domain"/>
    <property type="match status" value="1"/>
</dbReference>
<keyword id="KW-0067">ATP-binding</keyword>
<keyword id="KW-0131">Cell cycle</keyword>
<keyword id="KW-0132">Cell division</keyword>
<keyword id="KW-0133">Cell shape</keyword>
<keyword id="KW-0961">Cell wall biogenesis/degradation</keyword>
<keyword id="KW-0963">Cytoplasm</keyword>
<keyword id="KW-0436">Ligase</keyword>
<keyword id="KW-0547">Nucleotide-binding</keyword>
<keyword id="KW-0573">Peptidoglycan synthesis</keyword>
<comment type="function">
    <text evidence="1">Cell wall formation. Catalyzes the addition of glutamate to the nucleotide precursor UDP-N-acetylmuramoyl-L-alanine (UMA).</text>
</comment>
<comment type="catalytic activity">
    <reaction evidence="1">
        <text>UDP-N-acetyl-alpha-D-muramoyl-L-alanine + D-glutamate + ATP = UDP-N-acetyl-alpha-D-muramoyl-L-alanyl-D-glutamate + ADP + phosphate + H(+)</text>
        <dbReference type="Rhea" id="RHEA:16429"/>
        <dbReference type="ChEBI" id="CHEBI:15378"/>
        <dbReference type="ChEBI" id="CHEBI:29986"/>
        <dbReference type="ChEBI" id="CHEBI:30616"/>
        <dbReference type="ChEBI" id="CHEBI:43474"/>
        <dbReference type="ChEBI" id="CHEBI:83898"/>
        <dbReference type="ChEBI" id="CHEBI:83900"/>
        <dbReference type="ChEBI" id="CHEBI:456216"/>
        <dbReference type="EC" id="6.3.2.9"/>
    </reaction>
</comment>
<comment type="pathway">
    <text evidence="1">Cell wall biogenesis; peptidoglycan biosynthesis.</text>
</comment>
<comment type="subcellular location">
    <subcellularLocation>
        <location evidence="1">Cytoplasm</location>
    </subcellularLocation>
</comment>
<comment type="similarity">
    <text evidence="1">Belongs to the MurCDEF family.</text>
</comment>
<reference key="1">
    <citation type="journal article" date="2015" name="Proc. Natl. Acad. Sci. U.S.A.">
        <title>Trichodesmium genome maintains abundant, widespread noncoding DNA in situ, despite oligotrophic lifestyle.</title>
        <authorList>
            <person name="Walworth N."/>
            <person name="Pfreundt U."/>
            <person name="Nelson W.C."/>
            <person name="Mincer T."/>
            <person name="Heidelberg J.F."/>
            <person name="Fu F."/>
            <person name="Waterbury J.B."/>
            <person name="Glavina del Rio T."/>
            <person name="Goodwin L."/>
            <person name="Kyrpides N.C."/>
            <person name="Land M.L."/>
            <person name="Woyke T."/>
            <person name="Hutchins D.A."/>
            <person name="Hess W.R."/>
            <person name="Webb E.A."/>
        </authorList>
    </citation>
    <scope>NUCLEOTIDE SEQUENCE [LARGE SCALE GENOMIC DNA]</scope>
    <source>
        <strain>IMS101</strain>
    </source>
</reference>
<name>MURD_TRIEI</name>
<sequence length="462" mass="51353">MSKAHIIGFGKSGVAAARLLKKNGWEVELSDRNTSDSLQQKEKQLTQEGITVKLNYSFEPETSLDLVIVSPGVPWDLPALQRSRETGIETIGEMELAWRYLKSSSWVGITGTNGKTTTTALTAAIFQTAGLYAPACGNIGYAACELALQDTLPDWVIAEISSYQIESSNTLSPQIAVWTTFTADHLSRHYNLENYFNIKADLLNRSQIQILNGDDYYLHENAAHLYHNSYWTSIQGKANLVADVTRGIYLEDGWVVALQEKIIPVELLQMLGSHNQQNLLMAVAVAKFAGIENEAIAEAVKNFPGVPHRLEYICRWNGVDFINDSKATNYDAAAMGLKALVAPILLIAGGEAKEGNDNDWLRQIKEKVVFVLLIGSAAEFLAKRLQKINFLNYEIVENMERAVIRGAALSKKYDAKTVLLSPACASFDQYQNFEERGEVFRQLSLGLNHKKKNDIRFGSSRI</sequence>
<protein>
    <recommendedName>
        <fullName evidence="1">UDP-N-acetylmuramoylalanine--D-glutamate ligase</fullName>
        <ecNumber evidence="1">6.3.2.9</ecNumber>
    </recommendedName>
    <alternativeName>
        <fullName evidence="1">D-glutamic acid-adding enzyme</fullName>
    </alternativeName>
    <alternativeName>
        <fullName evidence="1">UDP-N-acetylmuramoyl-L-alanyl-D-glutamate synthetase</fullName>
    </alternativeName>
</protein>
<organism>
    <name type="scientific">Trichodesmium erythraeum (strain IMS101)</name>
    <dbReference type="NCBI Taxonomy" id="203124"/>
    <lineage>
        <taxon>Bacteria</taxon>
        <taxon>Bacillati</taxon>
        <taxon>Cyanobacteriota</taxon>
        <taxon>Cyanophyceae</taxon>
        <taxon>Oscillatoriophycideae</taxon>
        <taxon>Oscillatoriales</taxon>
        <taxon>Microcoleaceae</taxon>
        <taxon>Trichodesmium</taxon>
    </lineage>
</organism>
<proteinExistence type="inferred from homology"/>
<evidence type="ECO:0000255" key="1">
    <source>
        <dbReference type="HAMAP-Rule" id="MF_00639"/>
    </source>
</evidence>
<accession>Q10WA5</accession>